<reference key="1">
    <citation type="journal article" date="2006" name="PLoS Biol.">
        <title>The genome of deep-sea vent chemolithoautotroph Thiomicrospira crunogena XCL-2.</title>
        <authorList>
            <person name="Scott K.M."/>
            <person name="Sievert S.M."/>
            <person name="Abril F.N."/>
            <person name="Ball L.A."/>
            <person name="Barrett C.J."/>
            <person name="Blake R.A."/>
            <person name="Boller A.J."/>
            <person name="Chain P.S.G."/>
            <person name="Clark J.A."/>
            <person name="Davis C.R."/>
            <person name="Detter C."/>
            <person name="Do K.F."/>
            <person name="Dobrinski K.P."/>
            <person name="Faza B.I."/>
            <person name="Fitzpatrick K.A."/>
            <person name="Freyermuth S.K."/>
            <person name="Harmer T.L."/>
            <person name="Hauser L.J."/>
            <person name="Huegler M."/>
            <person name="Kerfeld C.A."/>
            <person name="Klotz M.G."/>
            <person name="Kong W.W."/>
            <person name="Land M."/>
            <person name="Lapidus A."/>
            <person name="Larimer F.W."/>
            <person name="Longo D.L."/>
            <person name="Lucas S."/>
            <person name="Malfatti S.A."/>
            <person name="Massey S.E."/>
            <person name="Martin D.D."/>
            <person name="McCuddin Z."/>
            <person name="Meyer F."/>
            <person name="Moore J.L."/>
            <person name="Ocampo L.H. Jr."/>
            <person name="Paul J.H."/>
            <person name="Paulsen I.T."/>
            <person name="Reep D.K."/>
            <person name="Ren Q."/>
            <person name="Ross R.L."/>
            <person name="Sato P.Y."/>
            <person name="Thomas P."/>
            <person name="Tinkham L.E."/>
            <person name="Zeruth G.T."/>
        </authorList>
    </citation>
    <scope>NUCLEOTIDE SEQUENCE [LARGE SCALE GENOMIC DNA]</scope>
    <source>
        <strain>DSM 25203 / XCL-2</strain>
    </source>
</reference>
<feature type="chain" id="PRO_0000325181" description="Shikimate dehydrogenase (NADP(+))">
    <location>
        <begin position="1"/>
        <end position="277"/>
    </location>
</feature>
<feature type="active site" description="Proton acceptor" evidence="1">
    <location>
        <position position="68"/>
    </location>
</feature>
<feature type="binding site" evidence="1">
    <location>
        <begin position="15"/>
        <end position="17"/>
    </location>
    <ligand>
        <name>shikimate</name>
        <dbReference type="ChEBI" id="CHEBI:36208"/>
    </ligand>
</feature>
<feature type="binding site" evidence="1">
    <location>
        <position position="64"/>
    </location>
    <ligand>
        <name>shikimate</name>
        <dbReference type="ChEBI" id="CHEBI:36208"/>
    </ligand>
</feature>
<feature type="binding site" evidence="1">
    <location>
        <position position="89"/>
    </location>
    <ligand>
        <name>shikimate</name>
        <dbReference type="ChEBI" id="CHEBI:36208"/>
    </ligand>
</feature>
<feature type="binding site" evidence="1">
    <location>
        <position position="104"/>
    </location>
    <ligand>
        <name>shikimate</name>
        <dbReference type="ChEBI" id="CHEBI:36208"/>
    </ligand>
</feature>
<feature type="binding site" evidence="1">
    <location>
        <begin position="129"/>
        <end position="133"/>
    </location>
    <ligand>
        <name>NADP(+)</name>
        <dbReference type="ChEBI" id="CHEBI:58349"/>
    </ligand>
</feature>
<feature type="binding site" evidence="1">
    <location>
        <begin position="153"/>
        <end position="158"/>
    </location>
    <ligand>
        <name>NADP(+)</name>
        <dbReference type="ChEBI" id="CHEBI:58349"/>
    </ligand>
</feature>
<feature type="binding site" evidence="1">
    <location>
        <position position="217"/>
    </location>
    <ligand>
        <name>NADP(+)</name>
        <dbReference type="ChEBI" id="CHEBI:58349"/>
    </ligand>
</feature>
<feature type="binding site" evidence="1">
    <location>
        <position position="219"/>
    </location>
    <ligand>
        <name>shikimate</name>
        <dbReference type="ChEBI" id="CHEBI:36208"/>
    </ligand>
</feature>
<feature type="binding site" evidence="1">
    <location>
        <position position="242"/>
    </location>
    <ligand>
        <name>NADP(+)</name>
        <dbReference type="ChEBI" id="CHEBI:58349"/>
    </ligand>
</feature>
<protein>
    <recommendedName>
        <fullName evidence="1">Shikimate dehydrogenase (NADP(+))</fullName>
        <shortName evidence="1">SDH</shortName>
        <ecNumber evidence="1">1.1.1.25</ecNumber>
    </recommendedName>
</protein>
<comment type="function">
    <text evidence="1">Involved in the biosynthesis of the chorismate, which leads to the biosynthesis of aromatic amino acids. Catalyzes the reversible NADPH linked reduction of 3-dehydroshikimate (DHSA) to yield shikimate (SA).</text>
</comment>
<comment type="catalytic activity">
    <reaction evidence="1">
        <text>shikimate + NADP(+) = 3-dehydroshikimate + NADPH + H(+)</text>
        <dbReference type="Rhea" id="RHEA:17737"/>
        <dbReference type="ChEBI" id="CHEBI:15378"/>
        <dbReference type="ChEBI" id="CHEBI:16630"/>
        <dbReference type="ChEBI" id="CHEBI:36208"/>
        <dbReference type="ChEBI" id="CHEBI:57783"/>
        <dbReference type="ChEBI" id="CHEBI:58349"/>
        <dbReference type="EC" id="1.1.1.25"/>
    </reaction>
</comment>
<comment type="pathway">
    <text evidence="1">Metabolic intermediate biosynthesis; chorismate biosynthesis; chorismate from D-erythrose 4-phosphate and phosphoenolpyruvate: step 4/7.</text>
</comment>
<comment type="subunit">
    <text evidence="1">Homodimer.</text>
</comment>
<comment type="similarity">
    <text evidence="1">Belongs to the shikimate dehydrogenase family.</text>
</comment>
<gene>
    <name evidence="1" type="primary">aroE</name>
    <name type="ordered locus">Tcr_0153</name>
</gene>
<accession>Q31JC4</accession>
<sequence length="277" mass="30534">MTDLYAVVGNPIAHSKSPLIHRLFAEQTDQDLVYEALLIDTEDTTFQFAISDLIARGYRGINITVPFKLDAFELADELSPRAEVAHAVNTFSFKDGKIFGDNTDGIGLVTDIEENANRPFKDQKVLILGAGGAVQGILQPLLEKQPGLVHIANRTAKRAEVLGKRFETFSPITSSDWEGIPDQAYDIIINGTSASLEGKLPPINSNVVGQDSLVYDMMYGAEPTIFMQWAQQHQPSCQVRDGLGMLVGQAAEAFYIWRGVRPQTQSVIDEVRRLIQA</sequence>
<keyword id="KW-0028">Amino-acid biosynthesis</keyword>
<keyword id="KW-0057">Aromatic amino acid biosynthesis</keyword>
<keyword id="KW-0521">NADP</keyword>
<keyword id="KW-0560">Oxidoreductase</keyword>
<proteinExistence type="inferred from homology"/>
<dbReference type="EC" id="1.1.1.25" evidence="1"/>
<dbReference type="EMBL" id="CP000109">
    <property type="protein sequence ID" value="ABB40749.1"/>
    <property type="molecule type" value="Genomic_DNA"/>
</dbReference>
<dbReference type="SMR" id="Q31JC4"/>
<dbReference type="STRING" id="317025.Tcr_0153"/>
<dbReference type="KEGG" id="tcx:Tcr_0153"/>
<dbReference type="eggNOG" id="COG0169">
    <property type="taxonomic scope" value="Bacteria"/>
</dbReference>
<dbReference type="HOGENOM" id="CLU_044063_2_1_6"/>
<dbReference type="OrthoDB" id="9776868at2"/>
<dbReference type="UniPathway" id="UPA00053">
    <property type="reaction ID" value="UER00087"/>
</dbReference>
<dbReference type="GO" id="GO:0005829">
    <property type="term" value="C:cytosol"/>
    <property type="evidence" value="ECO:0007669"/>
    <property type="project" value="TreeGrafter"/>
</dbReference>
<dbReference type="GO" id="GO:0050661">
    <property type="term" value="F:NADP binding"/>
    <property type="evidence" value="ECO:0007669"/>
    <property type="project" value="InterPro"/>
</dbReference>
<dbReference type="GO" id="GO:0004764">
    <property type="term" value="F:shikimate 3-dehydrogenase (NADP+) activity"/>
    <property type="evidence" value="ECO:0007669"/>
    <property type="project" value="UniProtKB-UniRule"/>
</dbReference>
<dbReference type="GO" id="GO:0008652">
    <property type="term" value="P:amino acid biosynthetic process"/>
    <property type="evidence" value="ECO:0007669"/>
    <property type="project" value="UniProtKB-KW"/>
</dbReference>
<dbReference type="GO" id="GO:0009073">
    <property type="term" value="P:aromatic amino acid family biosynthetic process"/>
    <property type="evidence" value="ECO:0007669"/>
    <property type="project" value="UniProtKB-KW"/>
</dbReference>
<dbReference type="GO" id="GO:0009423">
    <property type="term" value="P:chorismate biosynthetic process"/>
    <property type="evidence" value="ECO:0007669"/>
    <property type="project" value="UniProtKB-UniRule"/>
</dbReference>
<dbReference type="GO" id="GO:0019632">
    <property type="term" value="P:shikimate metabolic process"/>
    <property type="evidence" value="ECO:0007669"/>
    <property type="project" value="InterPro"/>
</dbReference>
<dbReference type="CDD" id="cd01065">
    <property type="entry name" value="NAD_bind_Shikimate_DH"/>
    <property type="match status" value="1"/>
</dbReference>
<dbReference type="FunFam" id="3.40.50.10860:FF:000006">
    <property type="entry name" value="Shikimate dehydrogenase (NADP(+))"/>
    <property type="match status" value="1"/>
</dbReference>
<dbReference type="Gene3D" id="3.40.50.10860">
    <property type="entry name" value="Leucine Dehydrogenase, chain A, domain 1"/>
    <property type="match status" value="1"/>
</dbReference>
<dbReference type="Gene3D" id="3.40.50.720">
    <property type="entry name" value="NAD(P)-binding Rossmann-like Domain"/>
    <property type="match status" value="1"/>
</dbReference>
<dbReference type="HAMAP" id="MF_00222">
    <property type="entry name" value="Shikimate_DH_AroE"/>
    <property type="match status" value="1"/>
</dbReference>
<dbReference type="InterPro" id="IPR046346">
    <property type="entry name" value="Aminoacid_DH-like_N_sf"/>
</dbReference>
<dbReference type="InterPro" id="IPR036291">
    <property type="entry name" value="NAD(P)-bd_dom_sf"/>
</dbReference>
<dbReference type="InterPro" id="IPR041121">
    <property type="entry name" value="SDH_C"/>
</dbReference>
<dbReference type="InterPro" id="IPR011342">
    <property type="entry name" value="Shikimate_DH"/>
</dbReference>
<dbReference type="InterPro" id="IPR013708">
    <property type="entry name" value="Shikimate_DH-bd_N"/>
</dbReference>
<dbReference type="InterPro" id="IPR022893">
    <property type="entry name" value="Shikimate_DH_fam"/>
</dbReference>
<dbReference type="InterPro" id="IPR006151">
    <property type="entry name" value="Shikm_DH/Glu-tRNA_Rdtase"/>
</dbReference>
<dbReference type="NCBIfam" id="TIGR00507">
    <property type="entry name" value="aroE"/>
    <property type="match status" value="1"/>
</dbReference>
<dbReference type="NCBIfam" id="NF001310">
    <property type="entry name" value="PRK00258.1-2"/>
    <property type="match status" value="1"/>
</dbReference>
<dbReference type="PANTHER" id="PTHR21089:SF1">
    <property type="entry name" value="BIFUNCTIONAL 3-DEHYDROQUINATE DEHYDRATASE_SHIKIMATE DEHYDROGENASE, CHLOROPLASTIC"/>
    <property type="match status" value="1"/>
</dbReference>
<dbReference type="PANTHER" id="PTHR21089">
    <property type="entry name" value="SHIKIMATE DEHYDROGENASE"/>
    <property type="match status" value="1"/>
</dbReference>
<dbReference type="Pfam" id="PF18317">
    <property type="entry name" value="SDH_C"/>
    <property type="match status" value="1"/>
</dbReference>
<dbReference type="Pfam" id="PF01488">
    <property type="entry name" value="Shikimate_DH"/>
    <property type="match status" value="1"/>
</dbReference>
<dbReference type="Pfam" id="PF08501">
    <property type="entry name" value="Shikimate_dh_N"/>
    <property type="match status" value="1"/>
</dbReference>
<dbReference type="SUPFAM" id="SSF53223">
    <property type="entry name" value="Aminoacid dehydrogenase-like, N-terminal domain"/>
    <property type="match status" value="1"/>
</dbReference>
<dbReference type="SUPFAM" id="SSF51735">
    <property type="entry name" value="NAD(P)-binding Rossmann-fold domains"/>
    <property type="match status" value="1"/>
</dbReference>
<evidence type="ECO:0000255" key="1">
    <source>
        <dbReference type="HAMAP-Rule" id="MF_00222"/>
    </source>
</evidence>
<name>AROE_HYDCU</name>
<organism>
    <name type="scientific">Hydrogenovibrio crunogenus (strain DSM 25203 / XCL-2)</name>
    <name type="common">Thiomicrospira crunogena</name>
    <dbReference type="NCBI Taxonomy" id="317025"/>
    <lineage>
        <taxon>Bacteria</taxon>
        <taxon>Pseudomonadati</taxon>
        <taxon>Pseudomonadota</taxon>
        <taxon>Gammaproteobacteria</taxon>
        <taxon>Thiotrichales</taxon>
        <taxon>Piscirickettsiaceae</taxon>
        <taxon>Hydrogenovibrio</taxon>
    </lineage>
</organism>